<proteinExistence type="inferred from homology"/>
<name>MURI_FUSNN</name>
<feature type="chain" id="PRO_0000095473" description="Glutamate racemase">
    <location>
        <begin position="1"/>
        <end position="264"/>
    </location>
</feature>
<feature type="active site" description="Proton donor/acceptor" evidence="1">
    <location>
        <position position="76"/>
    </location>
</feature>
<feature type="active site" description="Proton donor/acceptor" evidence="1">
    <location>
        <position position="186"/>
    </location>
</feature>
<feature type="binding site" evidence="1">
    <location>
        <begin position="12"/>
        <end position="13"/>
    </location>
    <ligand>
        <name>substrate</name>
    </ligand>
</feature>
<feature type="binding site" evidence="1">
    <location>
        <begin position="44"/>
        <end position="45"/>
    </location>
    <ligand>
        <name>substrate</name>
    </ligand>
</feature>
<feature type="binding site" evidence="1">
    <location>
        <begin position="77"/>
        <end position="78"/>
    </location>
    <ligand>
        <name>substrate</name>
    </ligand>
</feature>
<feature type="binding site" evidence="1">
    <location>
        <begin position="187"/>
        <end position="188"/>
    </location>
    <ligand>
        <name>substrate</name>
    </ligand>
</feature>
<reference key="1">
    <citation type="journal article" date="2002" name="J. Bacteriol.">
        <title>Genome sequence and analysis of the oral bacterium Fusobacterium nucleatum strain ATCC 25586.</title>
        <authorList>
            <person name="Kapatral V."/>
            <person name="Anderson I."/>
            <person name="Ivanova N."/>
            <person name="Reznik G."/>
            <person name="Los T."/>
            <person name="Lykidis A."/>
            <person name="Bhattacharyya A."/>
            <person name="Bartman A."/>
            <person name="Gardner W."/>
            <person name="Grechkin G."/>
            <person name="Zhu L."/>
            <person name="Vasieva O."/>
            <person name="Chu L."/>
            <person name="Kogan Y."/>
            <person name="Chaga O."/>
            <person name="Goltsman E."/>
            <person name="Bernal A."/>
            <person name="Larsen N."/>
            <person name="D'Souza M."/>
            <person name="Walunas T."/>
            <person name="Pusch G."/>
            <person name="Haselkorn R."/>
            <person name="Fonstein M."/>
            <person name="Kyrpides N.C."/>
            <person name="Overbeek R."/>
        </authorList>
    </citation>
    <scope>NUCLEOTIDE SEQUENCE [LARGE SCALE GENOMIC DNA]</scope>
    <source>
        <strain>ATCC 25586 / DSM 15643 / BCRC 10681 / CIP 101130 / JCM 8532 / KCTC 2640 / LMG 13131 / VPI 4355</strain>
    </source>
</reference>
<comment type="function">
    <text evidence="1">Provides the (R)-glutamate required for cell wall biosynthesis.</text>
</comment>
<comment type="catalytic activity">
    <reaction evidence="1">
        <text>L-glutamate = D-glutamate</text>
        <dbReference type="Rhea" id="RHEA:12813"/>
        <dbReference type="ChEBI" id="CHEBI:29985"/>
        <dbReference type="ChEBI" id="CHEBI:29986"/>
        <dbReference type="EC" id="5.1.1.3"/>
    </reaction>
</comment>
<comment type="pathway">
    <text evidence="1">Cell wall biogenesis; peptidoglycan biosynthesis.</text>
</comment>
<comment type="similarity">
    <text evidence="1">Belongs to the aspartate/glutamate racemases family.</text>
</comment>
<protein>
    <recommendedName>
        <fullName evidence="1">Glutamate racemase</fullName>
        <ecNumber evidence="1">5.1.1.3</ecNumber>
    </recommendedName>
</protein>
<keyword id="KW-0133">Cell shape</keyword>
<keyword id="KW-0961">Cell wall biogenesis/degradation</keyword>
<keyword id="KW-0413">Isomerase</keyword>
<keyword id="KW-0573">Peptidoglycan synthesis</keyword>
<keyword id="KW-1185">Reference proteome</keyword>
<evidence type="ECO:0000255" key="1">
    <source>
        <dbReference type="HAMAP-Rule" id="MF_00258"/>
    </source>
</evidence>
<accession>Q8REE6</accession>
<sequence>MAEKTQRIGIFDSGLGGTTVLKELINSLPNEDYIYYGDNGNFPYGSGKTKNELQKLTERILDFFVKNNCKLVIVACNTASTAAIDYLREKFSLPIIGIIEAGVKIASKNTKNKNIAVISTKFTAESHGYKNKAKMLDSELNVKEIACIEFAQMIETGWDTFDNRKELLNKYLSEIPKNADTLVLGCTHYPLIREDIEKNIKIKVVDPAVEIVERTIQTLTSLNLLNDKKERGRIIFFVTGETYHFKPTAEKFLGKEIEIYRIPK</sequence>
<gene>
    <name evidence="1" type="primary">murI</name>
    <name type="ordered locus">FN1161</name>
</gene>
<organism>
    <name type="scientific">Fusobacterium nucleatum subsp. nucleatum (strain ATCC 25586 / DSM 15643 / BCRC 10681 / CIP 101130 / JCM 8532 / KCTC 2640 / LMG 13131 / VPI 4355)</name>
    <dbReference type="NCBI Taxonomy" id="190304"/>
    <lineage>
        <taxon>Bacteria</taxon>
        <taxon>Fusobacteriati</taxon>
        <taxon>Fusobacteriota</taxon>
        <taxon>Fusobacteriia</taxon>
        <taxon>Fusobacteriales</taxon>
        <taxon>Fusobacteriaceae</taxon>
        <taxon>Fusobacterium</taxon>
    </lineage>
</organism>
<dbReference type="EC" id="5.1.1.3" evidence="1"/>
<dbReference type="EMBL" id="AE009951">
    <property type="protein sequence ID" value="AAL95357.1"/>
    <property type="molecule type" value="Genomic_DNA"/>
</dbReference>
<dbReference type="RefSeq" id="NP_604058.1">
    <property type="nucleotide sequence ID" value="NC_003454.1"/>
</dbReference>
<dbReference type="RefSeq" id="WP_005902800.1">
    <property type="nucleotide sequence ID" value="NZ_OZ209243.1"/>
</dbReference>
<dbReference type="SMR" id="Q8REE6"/>
<dbReference type="FunCoup" id="Q8REE6">
    <property type="interactions" value="196"/>
</dbReference>
<dbReference type="STRING" id="190304.FN1161"/>
<dbReference type="PaxDb" id="190304-FN1161"/>
<dbReference type="EnsemblBacteria" id="AAL95357">
    <property type="protein sequence ID" value="AAL95357"/>
    <property type="gene ID" value="FN1161"/>
</dbReference>
<dbReference type="GeneID" id="79784141"/>
<dbReference type="KEGG" id="fnu:FN1161"/>
<dbReference type="PATRIC" id="fig|190304.8.peg.1726"/>
<dbReference type="eggNOG" id="COG0796">
    <property type="taxonomic scope" value="Bacteria"/>
</dbReference>
<dbReference type="HOGENOM" id="CLU_052344_1_0_0"/>
<dbReference type="InParanoid" id="Q8REE6"/>
<dbReference type="BioCyc" id="FNUC190304:G1FZS-1740-MONOMER"/>
<dbReference type="BRENDA" id="5.1.1.3">
    <property type="organism ID" value="11865"/>
</dbReference>
<dbReference type="UniPathway" id="UPA00219"/>
<dbReference type="Proteomes" id="UP000002521">
    <property type="component" value="Chromosome"/>
</dbReference>
<dbReference type="GO" id="GO:0008881">
    <property type="term" value="F:glutamate racemase activity"/>
    <property type="evidence" value="ECO:0000318"/>
    <property type="project" value="GO_Central"/>
</dbReference>
<dbReference type="GO" id="GO:0071555">
    <property type="term" value="P:cell wall organization"/>
    <property type="evidence" value="ECO:0007669"/>
    <property type="project" value="UniProtKB-KW"/>
</dbReference>
<dbReference type="GO" id="GO:0009252">
    <property type="term" value="P:peptidoglycan biosynthetic process"/>
    <property type="evidence" value="ECO:0000318"/>
    <property type="project" value="GO_Central"/>
</dbReference>
<dbReference type="GO" id="GO:0008360">
    <property type="term" value="P:regulation of cell shape"/>
    <property type="evidence" value="ECO:0007669"/>
    <property type="project" value="UniProtKB-KW"/>
</dbReference>
<dbReference type="FunFam" id="3.40.50.1860:FF:000001">
    <property type="entry name" value="Glutamate racemase"/>
    <property type="match status" value="1"/>
</dbReference>
<dbReference type="Gene3D" id="3.40.50.1860">
    <property type="match status" value="2"/>
</dbReference>
<dbReference type="HAMAP" id="MF_00258">
    <property type="entry name" value="Glu_racemase"/>
    <property type="match status" value="1"/>
</dbReference>
<dbReference type="InterPro" id="IPR015942">
    <property type="entry name" value="Asp/Glu/hydantoin_racemase"/>
</dbReference>
<dbReference type="InterPro" id="IPR001920">
    <property type="entry name" value="Asp/Glu_race"/>
</dbReference>
<dbReference type="InterPro" id="IPR018187">
    <property type="entry name" value="Asp/Glu_racemase_AS_1"/>
</dbReference>
<dbReference type="InterPro" id="IPR033134">
    <property type="entry name" value="Asp/Glu_racemase_AS_2"/>
</dbReference>
<dbReference type="InterPro" id="IPR004391">
    <property type="entry name" value="Glu_race"/>
</dbReference>
<dbReference type="NCBIfam" id="TIGR00067">
    <property type="entry name" value="glut_race"/>
    <property type="match status" value="1"/>
</dbReference>
<dbReference type="PANTHER" id="PTHR21198">
    <property type="entry name" value="GLUTAMATE RACEMASE"/>
    <property type="match status" value="1"/>
</dbReference>
<dbReference type="PANTHER" id="PTHR21198:SF2">
    <property type="entry name" value="GLUTAMATE RACEMASE"/>
    <property type="match status" value="1"/>
</dbReference>
<dbReference type="Pfam" id="PF01177">
    <property type="entry name" value="Asp_Glu_race"/>
    <property type="match status" value="1"/>
</dbReference>
<dbReference type="SUPFAM" id="SSF53681">
    <property type="entry name" value="Aspartate/glutamate racemase"/>
    <property type="match status" value="2"/>
</dbReference>
<dbReference type="PROSITE" id="PS00923">
    <property type="entry name" value="ASP_GLU_RACEMASE_1"/>
    <property type="match status" value="1"/>
</dbReference>
<dbReference type="PROSITE" id="PS00924">
    <property type="entry name" value="ASP_GLU_RACEMASE_2"/>
    <property type="match status" value="1"/>
</dbReference>